<keyword id="KW-0963">Cytoplasm</keyword>
<keyword id="KW-0413">Isomerase</keyword>
<keyword id="KW-0627">Porphyrin biosynthesis</keyword>
<keyword id="KW-0663">Pyridoxal phosphate</keyword>
<proteinExistence type="inferred from homology"/>
<protein>
    <recommendedName>
        <fullName evidence="1">Glutamate-1-semialdehyde 2,1-aminomutase</fullName>
        <shortName evidence="1">GSA</shortName>
        <ecNumber evidence="1">5.4.3.8</ecNumber>
    </recommendedName>
    <alternativeName>
        <fullName evidence="1">Glutamate-1-semialdehyde aminotransferase</fullName>
        <shortName evidence="1">GSA-AT</shortName>
    </alternativeName>
</protein>
<comment type="catalytic activity">
    <reaction evidence="1">
        <text>(S)-4-amino-5-oxopentanoate = 5-aminolevulinate</text>
        <dbReference type="Rhea" id="RHEA:14265"/>
        <dbReference type="ChEBI" id="CHEBI:57501"/>
        <dbReference type="ChEBI" id="CHEBI:356416"/>
        <dbReference type="EC" id="5.4.3.8"/>
    </reaction>
</comment>
<comment type="cofactor">
    <cofactor evidence="1">
        <name>pyridoxal 5'-phosphate</name>
        <dbReference type="ChEBI" id="CHEBI:597326"/>
    </cofactor>
</comment>
<comment type="pathway">
    <text evidence="1">Porphyrin-containing compound metabolism; protoporphyrin-IX biosynthesis; 5-aminolevulinate from L-glutamyl-tRNA(Glu): step 2/2.</text>
</comment>
<comment type="subunit">
    <text evidence="1">Homodimer.</text>
</comment>
<comment type="subcellular location">
    <subcellularLocation>
        <location evidence="1">Cytoplasm</location>
    </subcellularLocation>
</comment>
<comment type="similarity">
    <text evidence="1">Belongs to the class-III pyridoxal-phosphate-dependent aminotransferase family. HemL subfamily.</text>
</comment>
<sequence>MSRSSDLFHKAQTIIPGGVNSPVRAFKGVGGEPVFFKSGKGAYLTDVDDKQYIDYVGSWGPLILGHCHPKVIEAVDNVLHSGMSFGAPTELEIQLAEKIASLMPSIEKIRMVNSGTEATMTAIRLARGFTNKNKFIKFNGCYHGHSDSLLVKAGSGLLTLGIPSTPGIPQCITEHTLTADFNNLEQVAQLFEKYPNDIATVILEPVPGNMGFILPKIEFLKGLRELCDQYNALLIFDEVMTGFRVGLHGAQGLFGIKPDITTLGKIIGGGMPVGALGGKREIMSFLAPEGPVYQAGTLSGNPLAMAAGLATLKEIEKINFFEDLSSTTNKLTEALSDAAENANIPLFAASLGGMFGFCFTDKNSVENYLDVASSDEVLFKKFFHAMLAQGVYFAPSMYEAGFVSSMHGDLEIQKTYDAAELVLNQLKSA</sequence>
<organism>
    <name type="scientific">Legionella pneumophila (strain Lens)</name>
    <dbReference type="NCBI Taxonomy" id="297245"/>
    <lineage>
        <taxon>Bacteria</taxon>
        <taxon>Pseudomonadati</taxon>
        <taxon>Pseudomonadota</taxon>
        <taxon>Gammaproteobacteria</taxon>
        <taxon>Legionellales</taxon>
        <taxon>Legionellaceae</taxon>
        <taxon>Legionella</taxon>
    </lineage>
</organism>
<evidence type="ECO:0000255" key="1">
    <source>
        <dbReference type="HAMAP-Rule" id="MF_00375"/>
    </source>
</evidence>
<dbReference type="EC" id="5.4.3.8" evidence="1"/>
<dbReference type="EMBL" id="CR628337">
    <property type="protein sequence ID" value="CAH15732.1"/>
    <property type="molecule type" value="Genomic_DNA"/>
</dbReference>
<dbReference type="RefSeq" id="WP_011215539.1">
    <property type="nucleotide sequence ID" value="NC_006369.1"/>
</dbReference>
<dbReference type="SMR" id="Q5WWG1"/>
<dbReference type="KEGG" id="lpf:lpl1492"/>
<dbReference type="LegioList" id="lpl1492"/>
<dbReference type="HOGENOM" id="CLU_016922_1_5_6"/>
<dbReference type="UniPathway" id="UPA00251">
    <property type="reaction ID" value="UER00317"/>
</dbReference>
<dbReference type="Proteomes" id="UP000002517">
    <property type="component" value="Chromosome"/>
</dbReference>
<dbReference type="GO" id="GO:0005737">
    <property type="term" value="C:cytoplasm"/>
    <property type="evidence" value="ECO:0007669"/>
    <property type="project" value="UniProtKB-SubCell"/>
</dbReference>
<dbReference type="GO" id="GO:0042286">
    <property type="term" value="F:glutamate-1-semialdehyde 2,1-aminomutase activity"/>
    <property type="evidence" value="ECO:0007669"/>
    <property type="project" value="UniProtKB-UniRule"/>
</dbReference>
<dbReference type="GO" id="GO:0030170">
    <property type="term" value="F:pyridoxal phosphate binding"/>
    <property type="evidence" value="ECO:0007669"/>
    <property type="project" value="InterPro"/>
</dbReference>
<dbReference type="GO" id="GO:0008483">
    <property type="term" value="F:transaminase activity"/>
    <property type="evidence" value="ECO:0007669"/>
    <property type="project" value="InterPro"/>
</dbReference>
<dbReference type="GO" id="GO:0006782">
    <property type="term" value="P:protoporphyrinogen IX biosynthetic process"/>
    <property type="evidence" value="ECO:0007669"/>
    <property type="project" value="UniProtKB-UniRule"/>
</dbReference>
<dbReference type="CDD" id="cd00610">
    <property type="entry name" value="OAT_like"/>
    <property type="match status" value="1"/>
</dbReference>
<dbReference type="FunFam" id="3.40.640.10:FF:000021">
    <property type="entry name" value="Glutamate-1-semialdehyde 2,1-aminomutase"/>
    <property type="match status" value="1"/>
</dbReference>
<dbReference type="Gene3D" id="3.90.1150.10">
    <property type="entry name" value="Aspartate Aminotransferase, domain 1"/>
    <property type="match status" value="1"/>
</dbReference>
<dbReference type="Gene3D" id="3.40.640.10">
    <property type="entry name" value="Type I PLP-dependent aspartate aminotransferase-like (Major domain)"/>
    <property type="match status" value="1"/>
</dbReference>
<dbReference type="HAMAP" id="MF_00375">
    <property type="entry name" value="HemL_aminotrans_3"/>
    <property type="match status" value="1"/>
</dbReference>
<dbReference type="InterPro" id="IPR004639">
    <property type="entry name" value="4pyrrol_synth_GluAld_NH2Trfase"/>
</dbReference>
<dbReference type="InterPro" id="IPR005814">
    <property type="entry name" value="Aminotrans_3"/>
</dbReference>
<dbReference type="InterPro" id="IPR049704">
    <property type="entry name" value="Aminotrans_3_PPA_site"/>
</dbReference>
<dbReference type="InterPro" id="IPR015424">
    <property type="entry name" value="PyrdxlP-dep_Trfase"/>
</dbReference>
<dbReference type="InterPro" id="IPR015421">
    <property type="entry name" value="PyrdxlP-dep_Trfase_major"/>
</dbReference>
<dbReference type="InterPro" id="IPR015422">
    <property type="entry name" value="PyrdxlP-dep_Trfase_small"/>
</dbReference>
<dbReference type="NCBIfam" id="TIGR00713">
    <property type="entry name" value="hemL"/>
    <property type="match status" value="1"/>
</dbReference>
<dbReference type="NCBIfam" id="NF000818">
    <property type="entry name" value="PRK00062.1"/>
    <property type="match status" value="1"/>
</dbReference>
<dbReference type="PANTHER" id="PTHR43713">
    <property type="entry name" value="GLUTAMATE-1-SEMIALDEHYDE 2,1-AMINOMUTASE"/>
    <property type="match status" value="1"/>
</dbReference>
<dbReference type="PANTHER" id="PTHR43713:SF3">
    <property type="entry name" value="GLUTAMATE-1-SEMIALDEHYDE 2,1-AMINOMUTASE 1, CHLOROPLASTIC-RELATED"/>
    <property type="match status" value="1"/>
</dbReference>
<dbReference type="Pfam" id="PF00202">
    <property type="entry name" value="Aminotran_3"/>
    <property type="match status" value="1"/>
</dbReference>
<dbReference type="SUPFAM" id="SSF53383">
    <property type="entry name" value="PLP-dependent transferases"/>
    <property type="match status" value="1"/>
</dbReference>
<dbReference type="PROSITE" id="PS00600">
    <property type="entry name" value="AA_TRANSFER_CLASS_3"/>
    <property type="match status" value="1"/>
</dbReference>
<gene>
    <name evidence="1" type="primary">hemL</name>
    <name type="ordered locus">lpl1492</name>
</gene>
<accession>Q5WWG1</accession>
<feature type="chain" id="PRO_0000243580" description="Glutamate-1-semialdehyde 2,1-aminomutase">
    <location>
        <begin position="1"/>
        <end position="429"/>
    </location>
</feature>
<feature type="modified residue" description="N6-(pyridoxal phosphate)lysine" evidence="1">
    <location>
        <position position="265"/>
    </location>
</feature>
<name>GSA_LEGPL</name>
<reference key="1">
    <citation type="journal article" date="2004" name="Nat. Genet.">
        <title>Evidence in the Legionella pneumophila genome for exploitation of host cell functions and high genome plasticity.</title>
        <authorList>
            <person name="Cazalet C."/>
            <person name="Rusniok C."/>
            <person name="Brueggemann H."/>
            <person name="Zidane N."/>
            <person name="Magnier A."/>
            <person name="Ma L."/>
            <person name="Tichit M."/>
            <person name="Jarraud S."/>
            <person name="Bouchier C."/>
            <person name="Vandenesch F."/>
            <person name="Kunst F."/>
            <person name="Etienne J."/>
            <person name="Glaser P."/>
            <person name="Buchrieser C."/>
        </authorList>
    </citation>
    <scope>NUCLEOTIDE SEQUENCE [LARGE SCALE GENOMIC DNA]</scope>
    <source>
        <strain>Lens</strain>
    </source>
</reference>